<reference key="1">
    <citation type="submission" date="2008-04" db="EMBL/GenBank/DDBJ databases">
        <title>Complete sequence of Yersinia pseudotuberculosis PB1/+.</title>
        <authorList>
            <person name="Copeland A."/>
            <person name="Lucas S."/>
            <person name="Lapidus A."/>
            <person name="Glavina del Rio T."/>
            <person name="Dalin E."/>
            <person name="Tice H."/>
            <person name="Bruce D."/>
            <person name="Goodwin L."/>
            <person name="Pitluck S."/>
            <person name="Munk A.C."/>
            <person name="Brettin T."/>
            <person name="Detter J.C."/>
            <person name="Han C."/>
            <person name="Tapia R."/>
            <person name="Schmutz J."/>
            <person name="Larimer F."/>
            <person name="Land M."/>
            <person name="Hauser L."/>
            <person name="Challacombe J.F."/>
            <person name="Green L."/>
            <person name="Lindler L.E."/>
            <person name="Nikolich M.P."/>
            <person name="Richardson P."/>
        </authorList>
    </citation>
    <scope>NUCLEOTIDE SEQUENCE [LARGE SCALE GENOMIC DNA]</scope>
    <source>
        <strain>PB1/+</strain>
    </source>
</reference>
<evidence type="ECO:0000255" key="1">
    <source>
        <dbReference type="HAMAP-Rule" id="MF_01166"/>
    </source>
</evidence>
<sequence>MKAIVFAYHDIGCVGLNALAEAGYDIQAVFTHTDNPGENRFFSSVARVAADLALPVFAPEDVNHPLWVERIRELQPDIIFSFYYRNMLSDEILSLAPQGGFNLHGSLLPQYRGRAPINWVLVNGETETGVTLHQMVKKADAGPIAGQYKVAISDVDTALTLHAKMRDAAQELLRNLLPRMKEGPLPLTPQKEADASYFGRRTAADGEIHWQKSAFTINNLVRAVTEPYPGAFSYLGQRKLTIWRSRPLDLVHNKLPGTVLSTAPLTVACGEGALEIITGQGEAGLYVQGDRLAQEMGIVTDVRLGNKPSNTLKRRTRVLILGVNGFIGNHLTERLLQDDRYEVYGLDIGSDAISRFLGNPAFHFVEGDISIHSEWIEYHIKKCDVILPLVAIATPIEYTRNPLRVFELDFEENLKIVRDCVKYNKRIVFPSTSEVYGMCDDKEFDEDTSRLIVGPINKQRWIYSVSKQLLDRVIWAYGVKEGLKFTLFRPFNWMGPRLDNLDAARIGSSRAITQLILNLVEGSPIKLVDGGAQKRCFTDIHDGIEALFRIIENRDGCCDGQIINIGNPTNEASIRELAEMLLTSFENHELRDHFPPFAGFKDIESSAYYGKGYQDVEYRTPSIKNARRILHWQPEIAMQQTVTETLDFFLRAAVIEKTAAPKDELNA</sequence>
<name>ARNA_YERPB</name>
<protein>
    <recommendedName>
        <fullName evidence="1">Bifunctional polymyxin resistance protein ArnA</fullName>
    </recommendedName>
    <domain>
        <recommendedName>
            <fullName evidence="1">UDP-4-amino-4-deoxy-L-arabinose formyltransferase</fullName>
            <ecNumber evidence="1">2.1.2.13</ecNumber>
        </recommendedName>
        <alternativeName>
            <fullName evidence="1">ArnAFT</fullName>
        </alternativeName>
        <alternativeName>
            <fullName evidence="1">UDP-L-Ara4N formyltransferase</fullName>
        </alternativeName>
    </domain>
    <domain>
        <recommendedName>
            <fullName evidence="1">UDP-glucuronic acid oxidase, UDP-4-keto-hexauronic acid decarboxylating</fullName>
            <ecNumber evidence="1">1.1.1.305</ecNumber>
        </recommendedName>
        <alternativeName>
            <fullName evidence="1">ArnADH</fullName>
        </alternativeName>
        <alternativeName>
            <fullName evidence="1">UDP-GlcUA decarboxylase</fullName>
        </alternativeName>
        <alternativeName>
            <fullName evidence="1">UDP-glucuronic acid dehydrogenase</fullName>
        </alternativeName>
    </domain>
</protein>
<proteinExistence type="inferred from homology"/>
<comment type="function">
    <text evidence="1">Bifunctional enzyme that catalyzes the oxidative decarboxylation of UDP-glucuronic acid (UDP-GlcUA) to UDP-4-keto-arabinose (UDP-Ara4O) and the addition of a formyl group to UDP-4-amino-4-deoxy-L-arabinose (UDP-L-Ara4N) to form UDP-L-4-formamido-arabinose (UDP-L-Ara4FN). The modified arabinose is attached to lipid A and is required for resistance to polymyxin and cationic antimicrobial peptides.</text>
</comment>
<comment type="catalytic activity">
    <reaction evidence="1">
        <text>UDP-alpha-D-glucuronate + NAD(+) = UDP-beta-L-threo-pentopyranos-4-ulose + CO2 + NADH</text>
        <dbReference type="Rhea" id="RHEA:24702"/>
        <dbReference type="ChEBI" id="CHEBI:16526"/>
        <dbReference type="ChEBI" id="CHEBI:57540"/>
        <dbReference type="ChEBI" id="CHEBI:57945"/>
        <dbReference type="ChEBI" id="CHEBI:58052"/>
        <dbReference type="ChEBI" id="CHEBI:58710"/>
        <dbReference type="EC" id="1.1.1.305"/>
    </reaction>
</comment>
<comment type="catalytic activity">
    <reaction evidence="1">
        <text>UDP-4-amino-4-deoxy-beta-L-arabinose + (6R)-10-formyltetrahydrofolate = UDP-4-deoxy-4-formamido-beta-L-arabinose + (6S)-5,6,7,8-tetrahydrofolate + H(+)</text>
        <dbReference type="Rhea" id="RHEA:24706"/>
        <dbReference type="ChEBI" id="CHEBI:15378"/>
        <dbReference type="ChEBI" id="CHEBI:57453"/>
        <dbReference type="ChEBI" id="CHEBI:58708"/>
        <dbReference type="ChEBI" id="CHEBI:58709"/>
        <dbReference type="ChEBI" id="CHEBI:195366"/>
        <dbReference type="EC" id="2.1.2.13"/>
    </reaction>
</comment>
<comment type="pathway">
    <text evidence="1">Nucleotide-sugar biosynthesis; UDP-4-deoxy-4-formamido-beta-L-arabinose biosynthesis; UDP-4-deoxy-4-formamido-beta-L-arabinose from UDP-alpha-D-glucuronate: step 1/3.</text>
</comment>
<comment type="pathway">
    <text evidence="1">Nucleotide-sugar biosynthesis; UDP-4-deoxy-4-formamido-beta-L-arabinose biosynthesis; UDP-4-deoxy-4-formamido-beta-L-arabinose from UDP-alpha-D-glucuronate: step 3/3.</text>
</comment>
<comment type="pathway">
    <text evidence="1">Bacterial outer membrane biogenesis; lipopolysaccharide biosynthesis.</text>
</comment>
<comment type="subunit">
    <text evidence="1">Homohexamer, formed by a dimer of trimers.</text>
</comment>
<comment type="similarity">
    <text evidence="1">In the N-terminal section; belongs to the Fmt family. UDP-L-Ara4N formyltransferase subfamily.</text>
</comment>
<comment type="similarity">
    <text evidence="1">In the C-terminal section; belongs to the NAD(P)-dependent epimerase/dehydratase family. UDP-glucuronic acid decarboxylase subfamily.</text>
</comment>
<accession>B2K5L3</accession>
<dbReference type="EC" id="2.1.2.13" evidence="1"/>
<dbReference type="EC" id="1.1.1.305" evidence="1"/>
<dbReference type="EMBL" id="CP001048">
    <property type="protein sequence ID" value="ACC89364.1"/>
    <property type="molecule type" value="Genomic_DNA"/>
</dbReference>
<dbReference type="RefSeq" id="WP_011192542.1">
    <property type="nucleotide sequence ID" value="NZ_CP009780.1"/>
</dbReference>
<dbReference type="SMR" id="B2K5L3"/>
<dbReference type="KEGG" id="ypb:YPTS_2403"/>
<dbReference type="PATRIC" id="fig|502801.10.peg.1809"/>
<dbReference type="UniPathway" id="UPA00030"/>
<dbReference type="UniPathway" id="UPA00032">
    <property type="reaction ID" value="UER00492"/>
</dbReference>
<dbReference type="UniPathway" id="UPA00032">
    <property type="reaction ID" value="UER00494"/>
</dbReference>
<dbReference type="GO" id="GO:0016020">
    <property type="term" value="C:membrane"/>
    <property type="evidence" value="ECO:0007669"/>
    <property type="project" value="GOC"/>
</dbReference>
<dbReference type="GO" id="GO:0016831">
    <property type="term" value="F:carboxy-lyase activity"/>
    <property type="evidence" value="ECO:0007669"/>
    <property type="project" value="InterPro"/>
</dbReference>
<dbReference type="GO" id="GO:0099619">
    <property type="term" value="F:UDP-4-amino-4-deoxy-L-arabinose formyltransferase activity"/>
    <property type="evidence" value="ECO:0007669"/>
    <property type="project" value="UniProtKB-EC"/>
</dbReference>
<dbReference type="GO" id="GO:0099618">
    <property type="term" value="F:UDP-glucuronate dehydrogenase activity"/>
    <property type="evidence" value="ECO:0007669"/>
    <property type="project" value="UniProtKB-EC"/>
</dbReference>
<dbReference type="GO" id="GO:0009245">
    <property type="term" value="P:lipid A biosynthetic process"/>
    <property type="evidence" value="ECO:0007669"/>
    <property type="project" value="UniProtKB-KW"/>
</dbReference>
<dbReference type="GO" id="GO:0009103">
    <property type="term" value="P:lipopolysaccharide biosynthetic process"/>
    <property type="evidence" value="ECO:0007669"/>
    <property type="project" value="UniProtKB-UniRule"/>
</dbReference>
<dbReference type="GO" id="GO:0046677">
    <property type="term" value="P:response to antibiotic"/>
    <property type="evidence" value="ECO:0007669"/>
    <property type="project" value="UniProtKB-KW"/>
</dbReference>
<dbReference type="CDD" id="cd08702">
    <property type="entry name" value="Arna_FMT_C"/>
    <property type="match status" value="1"/>
</dbReference>
<dbReference type="CDD" id="cd05257">
    <property type="entry name" value="Arna_like_SDR_e"/>
    <property type="match status" value="1"/>
</dbReference>
<dbReference type="FunFam" id="3.40.50.720:FF:000197">
    <property type="entry name" value="Bifunctional polymyxin resistance protein ArnA"/>
    <property type="match status" value="1"/>
</dbReference>
<dbReference type="Gene3D" id="3.40.50.12230">
    <property type="match status" value="1"/>
</dbReference>
<dbReference type="Gene3D" id="3.40.50.720">
    <property type="entry name" value="NAD(P)-binding Rossmann-like Domain"/>
    <property type="match status" value="1"/>
</dbReference>
<dbReference type="HAMAP" id="MF_01166">
    <property type="entry name" value="ArnA"/>
    <property type="match status" value="1"/>
</dbReference>
<dbReference type="InterPro" id="IPR045869">
    <property type="entry name" value="Arna-like_SDR_e"/>
</dbReference>
<dbReference type="InterPro" id="IPR021168">
    <property type="entry name" value="Bifun_polymyxin_resist_ArnA"/>
</dbReference>
<dbReference type="InterPro" id="IPR001509">
    <property type="entry name" value="Epimerase_deHydtase"/>
</dbReference>
<dbReference type="InterPro" id="IPR005793">
    <property type="entry name" value="Formyl_trans_C"/>
</dbReference>
<dbReference type="InterPro" id="IPR002376">
    <property type="entry name" value="Formyl_transf_N"/>
</dbReference>
<dbReference type="InterPro" id="IPR036477">
    <property type="entry name" value="Formyl_transf_N_sf"/>
</dbReference>
<dbReference type="InterPro" id="IPR011034">
    <property type="entry name" value="Formyl_transferase-like_C_sf"/>
</dbReference>
<dbReference type="InterPro" id="IPR050177">
    <property type="entry name" value="Lipid_A_modif_metabolic_enz"/>
</dbReference>
<dbReference type="InterPro" id="IPR036291">
    <property type="entry name" value="NAD(P)-bd_dom_sf"/>
</dbReference>
<dbReference type="NCBIfam" id="NF005414">
    <property type="entry name" value="PRK06988.1"/>
    <property type="match status" value="1"/>
</dbReference>
<dbReference type="NCBIfam" id="NF005998">
    <property type="entry name" value="PRK08125.1"/>
    <property type="match status" value="1"/>
</dbReference>
<dbReference type="NCBIfam" id="NF008872">
    <property type="entry name" value="PRK11908.1"/>
    <property type="match status" value="1"/>
</dbReference>
<dbReference type="PANTHER" id="PTHR43245">
    <property type="entry name" value="BIFUNCTIONAL POLYMYXIN RESISTANCE PROTEIN ARNA"/>
    <property type="match status" value="1"/>
</dbReference>
<dbReference type="PANTHER" id="PTHR43245:SF13">
    <property type="entry name" value="UDP-D-APIOSE_UDP-D-XYLOSE SYNTHASE 2"/>
    <property type="match status" value="1"/>
</dbReference>
<dbReference type="Pfam" id="PF01370">
    <property type="entry name" value="Epimerase"/>
    <property type="match status" value="1"/>
</dbReference>
<dbReference type="Pfam" id="PF02911">
    <property type="entry name" value="Formyl_trans_C"/>
    <property type="match status" value="1"/>
</dbReference>
<dbReference type="Pfam" id="PF00551">
    <property type="entry name" value="Formyl_trans_N"/>
    <property type="match status" value="1"/>
</dbReference>
<dbReference type="PIRSF" id="PIRSF036506">
    <property type="entry name" value="Bifun_polymyxin_resist_ArnA"/>
    <property type="match status" value="1"/>
</dbReference>
<dbReference type="SUPFAM" id="SSF50486">
    <property type="entry name" value="FMT C-terminal domain-like"/>
    <property type="match status" value="1"/>
</dbReference>
<dbReference type="SUPFAM" id="SSF53328">
    <property type="entry name" value="Formyltransferase"/>
    <property type="match status" value="1"/>
</dbReference>
<dbReference type="SUPFAM" id="SSF51735">
    <property type="entry name" value="NAD(P)-binding Rossmann-fold domains"/>
    <property type="match status" value="1"/>
</dbReference>
<keyword id="KW-0046">Antibiotic resistance</keyword>
<keyword id="KW-0441">Lipid A biosynthesis</keyword>
<keyword id="KW-0444">Lipid biosynthesis</keyword>
<keyword id="KW-0443">Lipid metabolism</keyword>
<keyword id="KW-0448">Lipopolysaccharide biosynthesis</keyword>
<keyword id="KW-0511">Multifunctional enzyme</keyword>
<keyword id="KW-0520">NAD</keyword>
<keyword id="KW-0560">Oxidoreductase</keyword>
<keyword id="KW-0808">Transferase</keyword>
<gene>
    <name evidence="1" type="primary">arnA</name>
    <name type="ordered locus">YPTS_2403</name>
</gene>
<organism>
    <name type="scientific">Yersinia pseudotuberculosis serotype IB (strain PB1/+)</name>
    <dbReference type="NCBI Taxonomy" id="502801"/>
    <lineage>
        <taxon>Bacteria</taxon>
        <taxon>Pseudomonadati</taxon>
        <taxon>Pseudomonadota</taxon>
        <taxon>Gammaproteobacteria</taxon>
        <taxon>Enterobacterales</taxon>
        <taxon>Yersiniaceae</taxon>
        <taxon>Yersinia</taxon>
    </lineage>
</organism>
<feature type="chain" id="PRO_1000137953" description="Bifunctional polymyxin resistance protein ArnA">
    <location>
        <begin position="1"/>
        <end position="667"/>
    </location>
</feature>
<feature type="region of interest" description="Formyltransferase ArnAFT">
    <location>
        <begin position="1"/>
        <end position="304"/>
    </location>
</feature>
<feature type="region of interest" description="Dehydrogenase ArnADH">
    <location>
        <begin position="314"/>
        <end position="667"/>
    </location>
</feature>
<feature type="active site" description="Proton donor; for formyltransferase activity" evidence="1">
    <location>
        <position position="104"/>
    </location>
</feature>
<feature type="active site" description="Proton acceptor; for decarboxylase activity" evidence="1">
    <location>
        <position position="434"/>
    </location>
</feature>
<feature type="active site" description="Proton donor; for decarboxylase activity" evidence="1">
    <location>
        <position position="619"/>
    </location>
</feature>
<feature type="binding site" evidence="1">
    <location>
        <position position="114"/>
    </location>
    <ligand>
        <name>(6R)-10-formyltetrahydrofolate</name>
        <dbReference type="ChEBI" id="CHEBI:195366"/>
    </ligand>
</feature>
<feature type="binding site" evidence="1">
    <location>
        <begin position="136"/>
        <end position="140"/>
    </location>
    <ligand>
        <name>(6R)-10-formyltetrahydrofolate</name>
        <dbReference type="ChEBI" id="CHEBI:195366"/>
    </ligand>
</feature>
<feature type="binding site" evidence="1">
    <location>
        <position position="347"/>
    </location>
    <ligand>
        <name>NAD(+)</name>
        <dbReference type="ChEBI" id="CHEBI:57540"/>
    </ligand>
</feature>
<feature type="binding site" evidence="1">
    <location>
        <begin position="368"/>
        <end position="369"/>
    </location>
    <ligand>
        <name>NAD(+)</name>
        <dbReference type="ChEBI" id="CHEBI:57540"/>
    </ligand>
</feature>
<feature type="binding site" evidence="1">
    <location>
        <position position="393"/>
    </location>
    <ligand>
        <name>UDP-alpha-D-glucuronate</name>
        <dbReference type="ChEBI" id="CHEBI:58052"/>
    </ligand>
</feature>
<feature type="binding site" evidence="1">
    <location>
        <position position="398"/>
    </location>
    <ligand>
        <name>UDP-alpha-D-glucuronate</name>
        <dbReference type="ChEBI" id="CHEBI:58052"/>
    </ligand>
</feature>
<feature type="binding site" evidence="1">
    <location>
        <begin position="432"/>
        <end position="433"/>
    </location>
    <ligand>
        <name>UDP-alpha-D-glucuronate</name>
        <dbReference type="ChEBI" id="CHEBI:58052"/>
    </ligand>
</feature>
<feature type="binding site" evidence="1">
    <location>
        <position position="460"/>
    </location>
    <ligand>
        <name>UDP-alpha-D-glucuronate</name>
        <dbReference type="ChEBI" id="CHEBI:58052"/>
    </ligand>
</feature>
<feature type="binding site" evidence="1">
    <location>
        <position position="492"/>
    </location>
    <ligand>
        <name>UDP-alpha-D-glucuronate</name>
        <dbReference type="ChEBI" id="CHEBI:58052"/>
    </ligand>
</feature>
<feature type="binding site" evidence="1">
    <location>
        <begin position="526"/>
        <end position="535"/>
    </location>
    <ligand>
        <name>UDP-alpha-D-glucuronate</name>
        <dbReference type="ChEBI" id="CHEBI:58052"/>
    </ligand>
</feature>
<feature type="binding site" evidence="1">
    <location>
        <position position="613"/>
    </location>
    <ligand>
        <name>UDP-alpha-D-glucuronate</name>
        <dbReference type="ChEBI" id="CHEBI:58052"/>
    </ligand>
</feature>
<feature type="site" description="Transition state stabilizer" evidence="1">
    <location>
        <position position="102"/>
    </location>
</feature>
<feature type="site" description="Raises pKa of active site His" evidence="1">
    <location>
        <position position="140"/>
    </location>
</feature>